<evidence type="ECO:0000255" key="1">
    <source>
        <dbReference type="HAMAP-Rule" id="MF_00555"/>
    </source>
</evidence>
<gene>
    <name evidence="1" type="primary">asnA</name>
    <name type="ordered locus">MS0036</name>
</gene>
<sequence>MKKSFILQQQEISFTKNTFTEKLAEHLGLVEVQGPILSQVGNGIQDNLSGTEKAVQVNVKMITDAAFEVVHSLAKWKRHTLARFGFAEGEGLFVHMKALRPDEDSLDQTHSVYVDQWDWEKVIPEGRRNLDYLKETVREIYAAILETEAAVDKKYGLKSFLPKEITFIHSEDLVKDYPGMTDKERENELCKKYGAVFLIGIGGVLPDGKPHDGRAPDYDDWTTTSEGEYKGLNGDILVWNPILNRAFEVSSMGIRVDETALRKQLSITGDEDRLKFDWHQDLINGRMPLSIGGGIGQSRLAMLLLQKRHIGEVQSSVWPKAVMEQYENIL</sequence>
<name>ASNA_MANSM</name>
<dbReference type="EC" id="6.3.1.1" evidence="1"/>
<dbReference type="EMBL" id="AE016827">
    <property type="protein sequence ID" value="AAU36643.1"/>
    <property type="molecule type" value="Genomic_DNA"/>
</dbReference>
<dbReference type="RefSeq" id="WP_011199220.1">
    <property type="nucleotide sequence ID" value="NC_006300.1"/>
</dbReference>
<dbReference type="SMR" id="Q65WL7"/>
<dbReference type="STRING" id="221988.MS0036"/>
<dbReference type="KEGG" id="msu:MS0036"/>
<dbReference type="eggNOG" id="COG2502">
    <property type="taxonomic scope" value="Bacteria"/>
</dbReference>
<dbReference type="HOGENOM" id="CLU_071543_0_0_6"/>
<dbReference type="OrthoDB" id="3185462at2"/>
<dbReference type="UniPathway" id="UPA00134">
    <property type="reaction ID" value="UER00194"/>
</dbReference>
<dbReference type="Proteomes" id="UP000000607">
    <property type="component" value="Chromosome"/>
</dbReference>
<dbReference type="GO" id="GO:0005829">
    <property type="term" value="C:cytosol"/>
    <property type="evidence" value="ECO:0007669"/>
    <property type="project" value="TreeGrafter"/>
</dbReference>
<dbReference type="GO" id="GO:0004071">
    <property type="term" value="F:aspartate-ammonia ligase activity"/>
    <property type="evidence" value="ECO:0007669"/>
    <property type="project" value="UniProtKB-UniRule"/>
</dbReference>
<dbReference type="GO" id="GO:0005524">
    <property type="term" value="F:ATP binding"/>
    <property type="evidence" value="ECO:0007669"/>
    <property type="project" value="UniProtKB-UniRule"/>
</dbReference>
<dbReference type="GO" id="GO:0070981">
    <property type="term" value="P:L-asparagine biosynthetic process"/>
    <property type="evidence" value="ECO:0007669"/>
    <property type="project" value="UniProtKB-UniRule"/>
</dbReference>
<dbReference type="Gene3D" id="3.30.930.10">
    <property type="entry name" value="Bira Bifunctional Protein, Domain 2"/>
    <property type="match status" value="1"/>
</dbReference>
<dbReference type="HAMAP" id="MF_00555">
    <property type="entry name" value="AsnA"/>
    <property type="match status" value="1"/>
</dbReference>
<dbReference type="InterPro" id="IPR006195">
    <property type="entry name" value="aa-tRNA-synth_II"/>
</dbReference>
<dbReference type="InterPro" id="IPR045864">
    <property type="entry name" value="aa-tRNA-synth_II/BPL/LPL"/>
</dbReference>
<dbReference type="InterPro" id="IPR004618">
    <property type="entry name" value="AsnA"/>
</dbReference>
<dbReference type="NCBIfam" id="TIGR00669">
    <property type="entry name" value="asnA"/>
    <property type="match status" value="1"/>
</dbReference>
<dbReference type="PANTHER" id="PTHR30073">
    <property type="entry name" value="ASPARTATE--AMMONIA LIGASE"/>
    <property type="match status" value="1"/>
</dbReference>
<dbReference type="PANTHER" id="PTHR30073:SF5">
    <property type="entry name" value="ASPARTATE--AMMONIA LIGASE"/>
    <property type="match status" value="1"/>
</dbReference>
<dbReference type="Pfam" id="PF03590">
    <property type="entry name" value="AsnA"/>
    <property type="match status" value="1"/>
</dbReference>
<dbReference type="PIRSF" id="PIRSF001555">
    <property type="entry name" value="Asp_ammon_ligase"/>
    <property type="match status" value="1"/>
</dbReference>
<dbReference type="SUPFAM" id="SSF55681">
    <property type="entry name" value="Class II aaRS and biotin synthetases"/>
    <property type="match status" value="1"/>
</dbReference>
<dbReference type="PROSITE" id="PS50862">
    <property type="entry name" value="AA_TRNA_LIGASE_II"/>
    <property type="match status" value="1"/>
</dbReference>
<proteinExistence type="inferred from homology"/>
<comment type="catalytic activity">
    <reaction evidence="1">
        <text>L-aspartate + NH4(+) + ATP = L-asparagine + AMP + diphosphate + H(+)</text>
        <dbReference type="Rhea" id="RHEA:11372"/>
        <dbReference type="ChEBI" id="CHEBI:15378"/>
        <dbReference type="ChEBI" id="CHEBI:28938"/>
        <dbReference type="ChEBI" id="CHEBI:29991"/>
        <dbReference type="ChEBI" id="CHEBI:30616"/>
        <dbReference type="ChEBI" id="CHEBI:33019"/>
        <dbReference type="ChEBI" id="CHEBI:58048"/>
        <dbReference type="ChEBI" id="CHEBI:456215"/>
        <dbReference type="EC" id="6.3.1.1"/>
    </reaction>
</comment>
<comment type="pathway">
    <text evidence="1">Amino-acid biosynthesis; L-asparagine biosynthesis; L-asparagine from L-aspartate (ammonia route): step 1/1.</text>
</comment>
<comment type="subcellular location">
    <subcellularLocation>
        <location evidence="1">Cytoplasm</location>
    </subcellularLocation>
</comment>
<comment type="similarity">
    <text evidence="1">Belongs to the class-II aminoacyl-tRNA synthetase family. AsnA subfamily.</text>
</comment>
<protein>
    <recommendedName>
        <fullName evidence="1">Aspartate--ammonia ligase</fullName>
        <ecNumber evidence="1">6.3.1.1</ecNumber>
    </recommendedName>
    <alternativeName>
        <fullName evidence="1">Asparagine synthetase A</fullName>
    </alternativeName>
</protein>
<reference key="1">
    <citation type="journal article" date="2004" name="Nat. Biotechnol.">
        <title>The genome sequence of the capnophilic rumen bacterium Mannheimia succiniciproducens.</title>
        <authorList>
            <person name="Hong S.H."/>
            <person name="Kim J.S."/>
            <person name="Lee S.Y."/>
            <person name="In Y.H."/>
            <person name="Choi S.S."/>
            <person name="Rih J.-K."/>
            <person name="Kim C.H."/>
            <person name="Jeong H."/>
            <person name="Hur C.G."/>
            <person name="Kim J.J."/>
        </authorList>
    </citation>
    <scope>NUCLEOTIDE SEQUENCE [LARGE SCALE GENOMIC DNA]</scope>
    <source>
        <strain>KCTC 0769BP / MBEL55E</strain>
    </source>
</reference>
<accession>Q65WL7</accession>
<feature type="chain" id="PRO_1000017954" description="Aspartate--ammonia ligase">
    <location>
        <begin position="1"/>
        <end position="330"/>
    </location>
</feature>
<keyword id="KW-0028">Amino-acid biosynthesis</keyword>
<keyword id="KW-0061">Asparagine biosynthesis</keyword>
<keyword id="KW-0067">ATP-binding</keyword>
<keyword id="KW-0963">Cytoplasm</keyword>
<keyword id="KW-0436">Ligase</keyword>
<keyword id="KW-0547">Nucleotide-binding</keyword>
<organism>
    <name type="scientific">Mannheimia succiniciproducens (strain KCTC 0769BP / MBEL55E)</name>
    <dbReference type="NCBI Taxonomy" id="221988"/>
    <lineage>
        <taxon>Bacteria</taxon>
        <taxon>Pseudomonadati</taxon>
        <taxon>Pseudomonadota</taxon>
        <taxon>Gammaproteobacteria</taxon>
        <taxon>Pasteurellales</taxon>
        <taxon>Pasteurellaceae</taxon>
        <taxon>Basfia</taxon>
    </lineage>
</organism>